<sequence length="255" mass="27791">MNTARLNQGTPLLLNAVSKHYAENIVLNQLDLHIPAGQFVAVVGRSGGGKSTLLHLLAGLETPTAGDVLAGTTPLAEIQDDTRMMFQDARLLPWKSVIDNVGLGLKGQWRDAARRALAAVGLENRAGEWPAALSGGQKQRVALARALIHRPGLLLLDEPLGALDALTRLEMQDLIVSLWQQHGFTVLLVTHDVSEAVAMADRVLLIEEGKISLDLTVDIPRPRRLGSVRLAELEAEVLQRVMRRGHSEQLIRRHG</sequence>
<comment type="function">
    <text evidence="1">Part of the ABC transporter complex SsuABC involved in aliphatic sulfonates import. Responsible for energy coupling to the transport system.</text>
</comment>
<comment type="catalytic activity">
    <reaction evidence="1">
        <text>ATP + H2O + aliphatic sulfonate-[sulfonate-binding protein]Side 1 = ADP + phosphate + aliphatic sulfonateSide 2 + [sulfonate-binding protein]Side 1.</text>
        <dbReference type="EC" id="7.6.2.14"/>
    </reaction>
</comment>
<comment type="subunit">
    <text evidence="1">The complex is composed of two ATP-binding proteins (SsuB), two transmembrane proteins (SsuC) and a solute-binding protein (SsuA).</text>
</comment>
<comment type="subcellular location">
    <subcellularLocation>
        <location evidence="1">Cell inner membrane</location>
        <topology evidence="1">Peripheral membrane protein</topology>
    </subcellularLocation>
</comment>
<comment type="similarity">
    <text evidence="1">Belongs to the ABC transporter superfamily. Aliphatic sulfonates importer (TC 3.A.1.17.2) family.</text>
</comment>
<evidence type="ECO:0000255" key="1">
    <source>
        <dbReference type="HAMAP-Rule" id="MF_01724"/>
    </source>
</evidence>
<dbReference type="EC" id="7.6.2.14" evidence="1"/>
<dbReference type="EMBL" id="CP000266">
    <property type="protein sequence ID" value="ABF03157.1"/>
    <property type="molecule type" value="Genomic_DNA"/>
</dbReference>
<dbReference type="RefSeq" id="WP_001090477.1">
    <property type="nucleotide sequence ID" value="NC_008258.1"/>
</dbReference>
<dbReference type="SMR" id="Q0T6A8"/>
<dbReference type="KEGG" id="sfv:SFV_0935"/>
<dbReference type="HOGENOM" id="CLU_000604_1_22_6"/>
<dbReference type="Proteomes" id="UP000000659">
    <property type="component" value="Chromosome"/>
</dbReference>
<dbReference type="GO" id="GO:0005886">
    <property type="term" value="C:plasma membrane"/>
    <property type="evidence" value="ECO:0007669"/>
    <property type="project" value="UniProtKB-SubCell"/>
</dbReference>
<dbReference type="GO" id="GO:0005524">
    <property type="term" value="F:ATP binding"/>
    <property type="evidence" value="ECO:0007669"/>
    <property type="project" value="UniProtKB-KW"/>
</dbReference>
<dbReference type="GO" id="GO:0016887">
    <property type="term" value="F:ATP hydrolysis activity"/>
    <property type="evidence" value="ECO:0007669"/>
    <property type="project" value="InterPro"/>
</dbReference>
<dbReference type="FunFam" id="3.40.50.300:FF:000653">
    <property type="entry name" value="Aliphatic sulfonates import ATP-binding protein SsuB"/>
    <property type="match status" value="1"/>
</dbReference>
<dbReference type="Gene3D" id="3.40.50.300">
    <property type="entry name" value="P-loop containing nucleotide triphosphate hydrolases"/>
    <property type="match status" value="1"/>
</dbReference>
<dbReference type="InterPro" id="IPR003593">
    <property type="entry name" value="AAA+_ATPase"/>
</dbReference>
<dbReference type="InterPro" id="IPR003439">
    <property type="entry name" value="ABC_transporter-like_ATP-bd"/>
</dbReference>
<dbReference type="InterPro" id="IPR017871">
    <property type="entry name" value="ABC_transporter-like_CS"/>
</dbReference>
<dbReference type="InterPro" id="IPR050166">
    <property type="entry name" value="ABC_transporter_ATP-bind"/>
</dbReference>
<dbReference type="InterPro" id="IPR027417">
    <property type="entry name" value="P-loop_NTPase"/>
</dbReference>
<dbReference type="NCBIfam" id="NF008420">
    <property type="entry name" value="PRK11247.1"/>
    <property type="match status" value="1"/>
</dbReference>
<dbReference type="PANTHER" id="PTHR42788:SF17">
    <property type="entry name" value="ALIPHATIC SULFONATES IMPORT ATP-BINDING PROTEIN SSUB"/>
    <property type="match status" value="1"/>
</dbReference>
<dbReference type="PANTHER" id="PTHR42788">
    <property type="entry name" value="TAURINE IMPORT ATP-BINDING PROTEIN-RELATED"/>
    <property type="match status" value="1"/>
</dbReference>
<dbReference type="Pfam" id="PF00005">
    <property type="entry name" value="ABC_tran"/>
    <property type="match status" value="1"/>
</dbReference>
<dbReference type="SMART" id="SM00382">
    <property type="entry name" value="AAA"/>
    <property type="match status" value="1"/>
</dbReference>
<dbReference type="SUPFAM" id="SSF52540">
    <property type="entry name" value="P-loop containing nucleoside triphosphate hydrolases"/>
    <property type="match status" value="1"/>
</dbReference>
<dbReference type="PROSITE" id="PS00211">
    <property type="entry name" value="ABC_TRANSPORTER_1"/>
    <property type="match status" value="1"/>
</dbReference>
<dbReference type="PROSITE" id="PS50893">
    <property type="entry name" value="ABC_TRANSPORTER_2"/>
    <property type="match status" value="1"/>
</dbReference>
<dbReference type="PROSITE" id="PS51291">
    <property type="entry name" value="SSUB"/>
    <property type="match status" value="1"/>
</dbReference>
<name>SSUB_SHIF8</name>
<gene>
    <name evidence="1" type="primary">ssuB</name>
    <name type="ordered locus">SFV_0935</name>
</gene>
<proteinExistence type="inferred from homology"/>
<protein>
    <recommendedName>
        <fullName evidence="1">Aliphatic sulfonates import ATP-binding protein SsuB</fullName>
        <ecNumber evidence="1">7.6.2.14</ecNumber>
    </recommendedName>
</protein>
<reference key="1">
    <citation type="journal article" date="2006" name="BMC Genomics">
        <title>Complete genome sequence of Shigella flexneri 5b and comparison with Shigella flexneri 2a.</title>
        <authorList>
            <person name="Nie H."/>
            <person name="Yang F."/>
            <person name="Zhang X."/>
            <person name="Yang J."/>
            <person name="Chen L."/>
            <person name="Wang J."/>
            <person name="Xiong Z."/>
            <person name="Peng J."/>
            <person name="Sun L."/>
            <person name="Dong J."/>
            <person name="Xue Y."/>
            <person name="Xu X."/>
            <person name="Chen S."/>
            <person name="Yao Z."/>
            <person name="Shen Y."/>
            <person name="Jin Q."/>
        </authorList>
    </citation>
    <scope>NUCLEOTIDE SEQUENCE [LARGE SCALE GENOMIC DNA]</scope>
    <source>
        <strain>8401</strain>
    </source>
</reference>
<organism>
    <name type="scientific">Shigella flexneri serotype 5b (strain 8401)</name>
    <dbReference type="NCBI Taxonomy" id="373384"/>
    <lineage>
        <taxon>Bacteria</taxon>
        <taxon>Pseudomonadati</taxon>
        <taxon>Pseudomonadota</taxon>
        <taxon>Gammaproteobacteria</taxon>
        <taxon>Enterobacterales</taxon>
        <taxon>Enterobacteriaceae</taxon>
        <taxon>Shigella</taxon>
    </lineage>
</organism>
<accession>Q0T6A8</accession>
<keyword id="KW-0067">ATP-binding</keyword>
<keyword id="KW-0997">Cell inner membrane</keyword>
<keyword id="KW-1003">Cell membrane</keyword>
<keyword id="KW-0472">Membrane</keyword>
<keyword id="KW-0547">Nucleotide-binding</keyword>
<keyword id="KW-1278">Translocase</keyword>
<keyword id="KW-0813">Transport</keyword>
<feature type="chain" id="PRO_0000279961" description="Aliphatic sulfonates import ATP-binding protein SsuB">
    <location>
        <begin position="1"/>
        <end position="255"/>
    </location>
</feature>
<feature type="domain" description="ABC transporter" evidence="1">
    <location>
        <begin position="12"/>
        <end position="233"/>
    </location>
</feature>
<feature type="binding site" evidence="1">
    <location>
        <begin position="44"/>
        <end position="51"/>
    </location>
    <ligand>
        <name>ATP</name>
        <dbReference type="ChEBI" id="CHEBI:30616"/>
    </ligand>
</feature>